<gene>
    <name evidence="1" type="primary">miaB</name>
    <name type="ordered locus">SYO3AOP1_0820</name>
</gene>
<name>MIAB_SULSY</name>
<protein>
    <recommendedName>
        <fullName evidence="1">tRNA-2-methylthio-N(6)-dimethylallyladenosine synthase</fullName>
        <ecNumber evidence="1">2.8.4.3</ecNumber>
    </recommendedName>
    <alternativeName>
        <fullName evidence="1">(Dimethylallyl)adenosine tRNA methylthiotransferase MiaB</fullName>
    </alternativeName>
    <alternativeName>
        <fullName evidence="1">tRNA-i(6)A37 methylthiotransferase</fullName>
    </alternativeName>
</protein>
<proteinExistence type="inferred from homology"/>
<reference key="1">
    <citation type="journal article" date="2009" name="J. Bacteriol.">
        <title>Complete and draft genome sequences of six members of the Aquificales.</title>
        <authorList>
            <person name="Reysenbach A.-L."/>
            <person name="Hamamura N."/>
            <person name="Podar M."/>
            <person name="Griffiths E."/>
            <person name="Ferreira S."/>
            <person name="Hochstein R."/>
            <person name="Heidelberg J."/>
            <person name="Johnson J."/>
            <person name="Mead D."/>
            <person name="Pohorille A."/>
            <person name="Sarmiento M."/>
            <person name="Schweighofer K."/>
            <person name="Seshadri R."/>
            <person name="Voytek M.A."/>
        </authorList>
    </citation>
    <scope>NUCLEOTIDE SEQUENCE [LARGE SCALE GENOMIC DNA]</scope>
    <source>
        <strain>YO3AOP1</strain>
    </source>
</reference>
<accession>B2V930</accession>
<organism>
    <name type="scientific">Sulfurihydrogenibium sp. (strain YO3AOP1)</name>
    <dbReference type="NCBI Taxonomy" id="436114"/>
    <lineage>
        <taxon>Bacteria</taxon>
        <taxon>Pseudomonadati</taxon>
        <taxon>Aquificota</taxon>
        <taxon>Aquificia</taxon>
        <taxon>Aquificales</taxon>
        <taxon>Hydrogenothermaceae</taxon>
        <taxon>Sulfurihydrogenibium</taxon>
    </lineage>
</organism>
<keyword id="KW-0004">4Fe-4S</keyword>
<keyword id="KW-0963">Cytoplasm</keyword>
<keyword id="KW-0408">Iron</keyword>
<keyword id="KW-0411">Iron-sulfur</keyword>
<keyword id="KW-0479">Metal-binding</keyword>
<keyword id="KW-0949">S-adenosyl-L-methionine</keyword>
<keyword id="KW-0808">Transferase</keyword>
<keyword id="KW-0819">tRNA processing</keyword>
<sequence>MKFYIKTFGCQMNVNDSEKMAGILQTLGYTPTENWEEADVILVNTCSVREKPDQKVLSALGEFKKVKKHNPNAVIGVCGCLAQRAGYEIYQKAPFIDIVFGTTNIHHLPNLLEEAKSGNKAIEILEEIDENENLLDQFPTVRENKYTAFVTVIRGCDKKCTYCIVPTTRGRERSRRIGDILREVQYLVEDGVKEIHLIGQNVTAYGKDFGDVKFWELLKAVAEVDGVERIRFTTGHPRDLDEDTIKVMADLPQICEALHLPIQAGSDRILQAMDRGYTQKEYLQKIELLKKYIPNIALSTDIIVGFPGETYEDYLETVKVIKEVEYDQVFAFKYSPRPGTPAADLPMTESPEELSKRLNDLINLQKDITFKKNLEYQDKIVEILVEEINQENKLVGRTRTNKLVYAEGSPEYLGKLVNVKIEKVNRFSLEGSIIGGD</sequence>
<dbReference type="EC" id="2.8.4.3" evidence="1"/>
<dbReference type="EMBL" id="CP001080">
    <property type="protein sequence ID" value="ACD66453.1"/>
    <property type="molecule type" value="Genomic_DNA"/>
</dbReference>
<dbReference type="RefSeq" id="WP_012459528.1">
    <property type="nucleotide sequence ID" value="NC_010730.1"/>
</dbReference>
<dbReference type="SMR" id="B2V930"/>
<dbReference type="STRING" id="436114.SYO3AOP1_0820"/>
<dbReference type="KEGG" id="sul:SYO3AOP1_0820"/>
<dbReference type="eggNOG" id="COG0621">
    <property type="taxonomic scope" value="Bacteria"/>
</dbReference>
<dbReference type="HOGENOM" id="CLU_018697_2_0_0"/>
<dbReference type="GO" id="GO:0005829">
    <property type="term" value="C:cytosol"/>
    <property type="evidence" value="ECO:0007669"/>
    <property type="project" value="TreeGrafter"/>
</dbReference>
<dbReference type="GO" id="GO:0051539">
    <property type="term" value="F:4 iron, 4 sulfur cluster binding"/>
    <property type="evidence" value="ECO:0007669"/>
    <property type="project" value="UniProtKB-UniRule"/>
</dbReference>
<dbReference type="GO" id="GO:0046872">
    <property type="term" value="F:metal ion binding"/>
    <property type="evidence" value="ECO:0007669"/>
    <property type="project" value="UniProtKB-KW"/>
</dbReference>
<dbReference type="GO" id="GO:0035597">
    <property type="term" value="F:N6-isopentenyladenosine methylthiotransferase activity"/>
    <property type="evidence" value="ECO:0007669"/>
    <property type="project" value="TreeGrafter"/>
</dbReference>
<dbReference type="CDD" id="cd01335">
    <property type="entry name" value="Radical_SAM"/>
    <property type="match status" value="1"/>
</dbReference>
<dbReference type="FunFam" id="3.40.50.12160:FF:000006">
    <property type="entry name" value="tRNA-2-methylthio-N(6)-dimethylallyladenosine synthase"/>
    <property type="match status" value="1"/>
</dbReference>
<dbReference type="FunFam" id="3.80.30.20:FF:000001">
    <property type="entry name" value="tRNA-2-methylthio-N(6)-dimethylallyladenosine synthase 2"/>
    <property type="match status" value="1"/>
</dbReference>
<dbReference type="Gene3D" id="3.40.50.12160">
    <property type="entry name" value="Methylthiotransferase, N-terminal domain"/>
    <property type="match status" value="1"/>
</dbReference>
<dbReference type="Gene3D" id="3.80.30.20">
    <property type="entry name" value="tm_1862 like domain"/>
    <property type="match status" value="1"/>
</dbReference>
<dbReference type="HAMAP" id="MF_01864">
    <property type="entry name" value="tRNA_metthiotr_MiaB"/>
    <property type="match status" value="1"/>
</dbReference>
<dbReference type="InterPro" id="IPR006638">
    <property type="entry name" value="Elp3/MiaA/NifB-like_rSAM"/>
</dbReference>
<dbReference type="InterPro" id="IPR005839">
    <property type="entry name" value="Methylthiotransferase"/>
</dbReference>
<dbReference type="InterPro" id="IPR020612">
    <property type="entry name" value="Methylthiotransferase_CS"/>
</dbReference>
<dbReference type="InterPro" id="IPR013848">
    <property type="entry name" value="Methylthiotransferase_N"/>
</dbReference>
<dbReference type="InterPro" id="IPR038135">
    <property type="entry name" value="Methylthiotransferase_N_sf"/>
</dbReference>
<dbReference type="InterPro" id="IPR006463">
    <property type="entry name" value="MiaB_methiolase"/>
</dbReference>
<dbReference type="InterPro" id="IPR007197">
    <property type="entry name" value="rSAM"/>
</dbReference>
<dbReference type="InterPro" id="IPR023404">
    <property type="entry name" value="rSAM_horseshoe"/>
</dbReference>
<dbReference type="InterPro" id="IPR002792">
    <property type="entry name" value="TRAM_dom"/>
</dbReference>
<dbReference type="NCBIfam" id="TIGR01574">
    <property type="entry name" value="miaB-methiolase"/>
    <property type="match status" value="1"/>
</dbReference>
<dbReference type="NCBIfam" id="TIGR00089">
    <property type="entry name" value="MiaB/RimO family radical SAM methylthiotransferase"/>
    <property type="match status" value="1"/>
</dbReference>
<dbReference type="PANTHER" id="PTHR43020">
    <property type="entry name" value="CDK5 REGULATORY SUBUNIT-ASSOCIATED PROTEIN 1"/>
    <property type="match status" value="1"/>
</dbReference>
<dbReference type="PANTHER" id="PTHR43020:SF2">
    <property type="entry name" value="MITOCHONDRIAL TRNA METHYLTHIOTRANSFERASE CDK5RAP1"/>
    <property type="match status" value="1"/>
</dbReference>
<dbReference type="Pfam" id="PF04055">
    <property type="entry name" value="Radical_SAM"/>
    <property type="match status" value="1"/>
</dbReference>
<dbReference type="Pfam" id="PF01938">
    <property type="entry name" value="TRAM"/>
    <property type="match status" value="1"/>
</dbReference>
<dbReference type="Pfam" id="PF00919">
    <property type="entry name" value="UPF0004"/>
    <property type="match status" value="1"/>
</dbReference>
<dbReference type="SFLD" id="SFLDF00273">
    <property type="entry name" value="(dimethylallyl)adenosine_tRNA"/>
    <property type="match status" value="1"/>
</dbReference>
<dbReference type="SFLD" id="SFLDG01082">
    <property type="entry name" value="B12-binding_domain_containing"/>
    <property type="match status" value="1"/>
</dbReference>
<dbReference type="SFLD" id="SFLDG01061">
    <property type="entry name" value="methylthiotransferase"/>
    <property type="match status" value="1"/>
</dbReference>
<dbReference type="SMART" id="SM00729">
    <property type="entry name" value="Elp3"/>
    <property type="match status" value="1"/>
</dbReference>
<dbReference type="SUPFAM" id="SSF102114">
    <property type="entry name" value="Radical SAM enzymes"/>
    <property type="match status" value="1"/>
</dbReference>
<dbReference type="PROSITE" id="PS51449">
    <property type="entry name" value="MTTASE_N"/>
    <property type="match status" value="1"/>
</dbReference>
<dbReference type="PROSITE" id="PS01278">
    <property type="entry name" value="MTTASE_RADICAL"/>
    <property type="match status" value="1"/>
</dbReference>
<dbReference type="PROSITE" id="PS51918">
    <property type="entry name" value="RADICAL_SAM"/>
    <property type="match status" value="1"/>
</dbReference>
<dbReference type="PROSITE" id="PS50926">
    <property type="entry name" value="TRAM"/>
    <property type="match status" value="1"/>
</dbReference>
<feature type="chain" id="PRO_0000374588" description="tRNA-2-methylthio-N(6)-dimethylallyladenosine synthase">
    <location>
        <begin position="1"/>
        <end position="437"/>
    </location>
</feature>
<feature type="domain" description="MTTase N-terminal" evidence="1">
    <location>
        <begin position="1"/>
        <end position="117"/>
    </location>
</feature>
<feature type="domain" description="Radical SAM core" evidence="2">
    <location>
        <begin position="142"/>
        <end position="371"/>
    </location>
</feature>
<feature type="domain" description="TRAM" evidence="1">
    <location>
        <begin position="374"/>
        <end position="435"/>
    </location>
</feature>
<feature type="binding site" evidence="1">
    <location>
        <position position="10"/>
    </location>
    <ligand>
        <name>[4Fe-4S] cluster</name>
        <dbReference type="ChEBI" id="CHEBI:49883"/>
        <label>1</label>
    </ligand>
</feature>
<feature type="binding site" evidence="1">
    <location>
        <position position="46"/>
    </location>
    <ligand>
        <name>[4Fe-4S] cluster</name>
        <dbReference type="ChEBI" id="CHEBI:49883"/>
        <label>1</label>
    </ligand>
</feature>
<feature type="binding site" evidence="1">
    <location>
        <position position="80"/>
    </location>
    <ligand>
        <name>[4Fe-4S] cluster</name>
        <dbReference type="ChEBI" id="CHEBI:49883"/>
        <label>1</label>
    </ligand>
</feature>
<feature type="binding site" evidence="1">
    <location>
        <position position="156"/>
    </location>
    <ligand>
        <name>[4Fe-4S] cluster</name>
        <dbReference type="ChEBI" id="CHEBI:49883"/>
        <label>2</label>
        <note>4Fe-4S-S-AdoMet</note>
    </ligand>
</feature>
<feature type="binding site" evidence="1">
    <location>
        <position position="160"/>
    </location>
    <ligand>
        <name>[4Fe-4S] cluster</name>
        <dbReference type="ChEBI" id="CHEBI:49883"/>
        <label>2</label>
        <note>4Fe-4S-S-AdoMet</note>
    </ligand>
</feature>
<feature type="binding site" evidence="1">
    <location>
        <position position="163"/>
    </location>
    <ligand>
        <name>[4Fe-4S] cluster</name>
        <dbReference type="ChEBI" id="CHEBI:49883"/>
        <label>2</label>
        <note>4Fe-4S-S-AdoMet</note>
    </ligand>
</feature>
<evidence type="ECO:0000255" key="1">
    <source>
        <dbReference type="HAMAP-Rule" id="MF_01864"/>
    </source>
</evidence>
<evidence type="ECO:0000255" key="2">
    <source>
        <dbReference type="PROSITE-ProRule" id="PRU01266"/>
    </source>
</evidence>
<comment type="function">
    <text evidence="1">Catalyzes the methylthiolation of N6-(dimethylallyl)adenosine (i(6)A), leading to the formation of 2-methylthio-N6-(dimethylallyl)adenosine (ms(2)i(6)A) at position 37 in tRNAs that read codons beginning with uridine.</text>
</comment>
<comment type="catalytic activity">
    <reaction evidence="1">
        <text>N(6)-dimethylallyladenosine(37) in tRNA + (sulfur carrier)-SH + AH2 + 2 S-adenosyl-L-methionine = 2-methylsulfanyl-N(6)-dimethylallyladenosine(37) in tRNA + (sulfur carrier)-H + 5'-deoxyadenosine + L-methionine + A + S-adenosyl-L-homocysteine + 2 H(+)</text>
        <dbReference type="Rhea" id="RHEA:37067"/>
        <dbReference type="Rhea" id="RHEA-COMP:10375"/>
        <dbReference type="Rhea" id="RHEA-COMP:10376"/>
        <dbReference type="Rhea" id="RHEA-COMP:14737"/>
        <dbReference type="Rhea" id="RHEA-COMP:14739"/>
        <dbReference type="ChEBI" id="CHEBI:13193"/>
        <dbReference type="ChEBI" id="CHEBI:15378"/>
        <dbReference type="ChEBI" id="CHEBI:17319"/>
        <dbReference type="ChEBI" id="CHEBI:17499"/>
        <dbReference type="ChEBI" id="CHEBI:29917"/>
        <dbReference type="ChEBI" id="CHEBI:57844"/>
        <dbReference type="ChEBI" id="CHEBI:57856"/>
        <dbReference type="ChEBI" id="CHEBI:59789"/>
        <dbReference type="ChEBI" id="CHEBI:64428"/>
        <dbReference type="ChEBI" id="CHEBI:74415"/>
        <dbReference type="ChEBI" id="CHEBI:74417"/>
        <dbReference type="EC" id="2.8.4.3"/>
    </reaction>
</comment>
<comment type="cofactor">
    <cofactor evidence="1">
        <name>[4Fe-4S] cluster</name>
        <dbReference type="ChEBI" id="CHEBI:49883"/>
    </cofactor>
    <text evidence="1">Binds 2 [4Fe-4S] clusters. One cluster is coordinated with 3 cysteines and an exchangeable S-adenosyl-L-methionine.</text>
</comment>
<comment type="subunit">
    <text evidence="1">Monomer.</text>
</comment>
<comment type="subcellular location">
    <subcellularLocation>
        <location evidence="1">Cytoplasm</location>
    </subcellularLocation>
</comment>
<comment type="similarity">
    <text evidence="1">Belongs to the methylthiotransferase family. MiaB subfamily.</text>
</comment>